<comment type="function">
    <text evidence="1">This is one of the proteins that bind and probably mediate the attachment of the 5S RNA into the large ribosomal subunit, where it forms part of the central protuberance. In the 70S ribosome it contacts protein S13 of the 30S subunit (bridge B1b), connecting the 2 subunits; this bridge is implicated in subunit movement. Contacts the P site tRNA; the 5S rRNA and some of its associated proteins might help stabilize positioning of ribosome-bound tRNAs.</text>
</comment>
<comment type="subunit">
    <text evidence="1">Part of the 50S ribosomal subunit; part of the 5S rRNA/L5/L18/L25 subcomplex. Contacts the 5S rRNA and the P site tRNA. Forms a bridge to the 30S subunit in the 70S ribosome.</text>
</comment>
<comment type="similarity">
    <text evidence="1">Belongs to the universal ribosomal protein uL5 family.</text>
</comment>
<name>RL5_ECO24</name>
<dbReference type="EMBL" id="CP000800">
    <property type="protein sequence ID" value="ABV20051.1"/>
    <property type="molecule type" value="Genomic_DNA"/>
</dbReference>
<dbReference type="RefSeq" id="WP_001096200.1">
    <property type="nucleotide sequence ID" value="NC_009801.1"/>
</dbReference>
<dbReference type="SMR" id="A7ZSJ7"/>
<dbReference type="GeneID" id="93778679"/>
<dbReference type="KEGG" id="ecw:EcE24377A_3791"/>
<dbReference type="HOGENOM" id="CLU_061015_2_1_6"/>
<dbReference type="Proteomes" id="UP000001122">
    <property type="component" value="Chromosome"/>
</dbReference>
<dbReference type="GO" id="GO:1990904">
    <property type="term" value="C:ribonucleoprotein complex"/>
    <property type="evidence" value="ECO:0007669"/>
    <property type="project" value="UniProtKB-KW"/>
</dbReference>
<dbReference type="GO" id="GO:0005840">
    <property type="term" value="C:ribosome"/>
    <property type="evidence" value="ECO:0007669"/>
    <property type="project" value="UniProtKB-KW"/>
</dbReference>
<dbReference type="GO" id="GO:0019843">
    <property type="term" value="F:rRNA binding"/>
    <property type="evidence" value="ECO:0007669"/>
    <property type="project" value="UniProtKB-UniRule"/>
</dbReference>
<dbReference type="GO" id="GO:0003735">
    <property type="term" value="F:structural constituent of ribosome"/>
    <property type="evidence" value="ECO:0007669"/>
    <property type="project" value="InterPro"/>
</dbReference>
<dbReference type="GO" id="GO:0000049">
    <property type="term" value="F:tRNA binding"/>
    <property type="evidence" value="ECO:0007669"/>
    <property type="project" value="UniProtKB-UniRule"/>
</dbReference>
<dbReference type="GO" id="GO:0006412">
    <property type="term" value="P:translation"/>
    <property type="evidence" value="ECO:0007669"/>
    <property type="project" value="UniProtKB-UniRule"/>
</dbReference>
<dbReference type="FunFam" id="3.30.1440.10:FF:000001">
    <property type="entry name" value="50S ribosomal protein L5"/>
    <property type="match status" value="1"/>
</dbReference>
<dbReference type="Gene3D" id="3.30.1440.10">
    <property type="match status" value="1"/>
</dbReference>
<dbReference type="HAMAP" id="MF_01333_B">
    <property type="entry name" value="Ribosomal_uL5_B"/>
    <property type="match status" value="1"/>
</dbReference>
<dbReference type="InterPro" id="IPR002132">
    <property type="entry name" value="Ribosomal_uL5"/>
</dbReference>
<dbReference type="InterPro" id="IPR020930">
    <property type="entry name" value="Ribosomal_uL5_bac-type"/>
</dbReference>
<dbReference type="InterPro" id="IPR031309">
    <property type="entry name" value="Ribosomal_uL5_C"/>
</dbReference>
<dbReference type="InterPro" id="IPR020929">
    <property type="entry name" value="Ribosomal_uL5_CS"/>
</dbReference>
<dbReference type="InterPro" id="IPR022803">
    <property type="entry name" value="Ribosomal_uL5_dom_sf"/>
</dbReference>
<dbReference type="InterPro" id="IPR031310">
    <property type="entry name" value="Ribosomal_uL5_N"/>
</dbReference>
<dbReference type="NCBIfam" id="NF000585">
    <property type="entry name" value="PRK00010.1"/>
    <property type="match status" value="1"/>
</dbReference>
<dbReference type="PANTHER" id="PTHR11994">
    <property type="entry name" value="60S RIBOSOMAL PROTEIN L11-RELATED"/>
    <property type="match status" value="1"/>
</dbReference>
<dbReference type="Pfam" id="PF00281">
    <property type="entry name" value="Ribosomal_L5"/>
    <property type="match status" value="1"/>
</dbReference>
<dbReference type="Pfam" id="PF00673">
    <property type="entry name" value="Ribosomal_L5_C"/>
    <property type="match status" value="1"/>
</dbReference>
<dbReference type="PIRSF" id="PIRSF002161">
    <property type="entry name" value="Ribosomal_L5"/>
    <property type="match status" value="1"/>
</dbReference>
<dbReference type="SUPFAM" id="SSF55282">
    <property type="entry name" value="RL5-like"/>
    <property type="match status" value="1"/>
</dbReference>
<dbReference type="PROSITE" id="PS00358">
    <property type="entry name" value="RIBOSOMAL_L5"/>
    <property type="match status" value="1"/>
</dbReference>
<organism>
    <name type="scientific">Escherichia coli O139:H28 (strain E24377A / ETEC)</name>
    <dbReference type="NCBI Taxonomy" id="331111"/>
    <lineage>
        <taxon>Bacteria</taxon>
        <taxon>Pseudomonadati</taxon>
        <taxon>Pseudomonadota</taxon>
        <taxon>Gammaproteobacteria</taxon>
        <taxon>Enterobacterales</taxon>
        <taxon>Enterobacteriaceae</taxon>
        <taxon>Escherichia</taxon>
    </lineage>
</organism>
<proteinExistence type="inferred from homology"/>
<sequence length="179" mass="20302">MAKLHDYYKDEVVKKLMTEFNYNSVMQVPRVEKITLNMGVGEAIADKKLLDNAAADLAAISGQKPLITKARKSVAGFKIRQGYPIGCKVTLRGERMWEFFERLITIAVPRIRDFRGLSAKSFDGRGNYSMGVREQIIFPEIDYDKVDRVRGLDITITTTAKSDEEGRALLAAFDFPFRK</sequence>
<keyword id="KW-0007">Acetylation</keyword>
<keyword id="KW-1185">Reference proteome</keyword>
<keyword id="KW-0687">Ribonucleoprotein</keyword>
<keyword id="KW-0689">Ribosomal protein</keyword>
<keyword id="KW-0694">RNA-binding</keyword>
<keyword id="KW-0699">rRNA-binding</keyword>
<keyword id="KW-0820">tRNA-binding</keyword>
<accession>A7ZSJ7</accession>
<evidence type="ECO:0000255" key="1">
    <source>
        <dbReference type="HAMAP-Rule" id="MF_01333"/>
    </source>
</evidence>
<evidence type="ECO:0000305" key="2"/>
<feature type="chain" id="PRO_1000067618" description="Large ribosomal subunit protein uL5">
    <location>
        <begin position="1"/>
        <end position="179"/>
    </location>
</feature>
<feature type="modified residue" description="N6-acetyllysine" evidence="1">
    <location>
        <position position="3"/>
    </location>
</feature>
<gene>
    <name evidence="1" type="primary">rplE</name>
    <name type="ordered locus">EcE24377A_3791</name>
</gene>
<protein>
    <recommendedName>
        <fullName evidence="1">Large ribosomal subunit protein uL5</fullName>
    </recommendedName>
    <alternativeName>
        <fullName evidence="2">50S ribosomal protein L5</fullName>
    </alternativeName>
</protein>
<reference key="1">
    <citation type="journal article" date="2008" name="J. Bacteriol.">
        <title>The pangenome structure of Escherichia coli: comparative genomic analysis of E. coli commensal and pathogenic isolates.</title>
        <authorList>
            <person name="Rasko D.A."/>
            <person name="Rosovitz M.J."/>
            <person name="Myers G.S.A."/>
            <person name="Mongodin E.F."/>
            <person name="Fricke W.F."/>
            <person name="Gajer P."/>
            <person name="Crabtree J."/>
            <person name="Sebaihia M."/>
            <person name="Thomson N.R."/>
            <person name="Chaudhuri R."/>
            <person name="Henderson I.R."/>
            <person name="Sperandio V."/>
            <person name="Ravel J."/>
        </authorList>
    </citation>
    <scope>NUCLEOTIDE SEQUENCE [LARGE SCALE GENOMIC DNA]</scope>
    <source>
        <strain>E24377A / ETEC</strain>
    </source>
</reference>